<name>LEA34_GOSHI</name>
<proteinExistence type="inferred from homology"/>
<evidence type="ECO:0000255" key="1"/>
<evidence type="ECO:0000256" key="2">
    <source>
        <dbReference type="SAM" id="MobiDB-lite"/>
    </source>
</evidence>
<evidence type="ECO:0000305" key="3"/>
<protein>
    <recommendedName>
        <fullName>Late embryogenesis abundant protein D-34</fullName>
        <shortName>LEA D-34</shortName>
    </recommendedName>
</protein>
<keyword id="KW-1185">Reference proteome</keyword>
<keyword id="KW-0677">Repeat</keyword>
<feature type="chain" id="PRO_0000221240" description="Late embryogenesis abundant protein D-34">
    <location>
        <begin position="1"/>
        <end position="264"/>
    </location>
</feature>
<feature type="domain" description="SMP 1" evidence="1">
    <location>
        <begin position="22"/>
        <end position="76"/>
    </location>
</feature>
<feature type="domain" description="SMP 2" evidence="1">
    <location>
        <begin position="138"/>
        <end position="194"/>
    </location>
</feature>
<feature type="domain" description="SMP 3" evidence="1">
    <location>
        <begin position="203"/>
        <end position="261"/>
    </location>
</feature>
<feature type="region of interest" description="Disordered" evidence="2">
    <location>
        <begin position="1"/>
        <end position="23"/>
    </location>
</feature>
<feature type="compositionally biased region" description="Low complexity" evidence="2">
    <location>
        <begin position="1"/>
        <end position="16"/>
    </location>
</feature>
<sequence length="264" mass="26912">MSQGQPRRPQQPAGQGENQEPIKYGDVFNVSGELANKPIAPQDAAMMQTAETQVLGQTQKGGTAAVMQAAATRNEQVGVVGHNDITDIAGEQGVTLAETDVAGRRIITEAVAGQVVGQYVQATPVMTSQVGVVLQNAITIGEALEATAKTAGDKPVDQSDAAAVQAAEVRATGSNVIIPGGLAATAQSAAAHNATLDRDEEKIKLNQVLTGATAKLPADKAVTRQDAEGVVSAELRNNPNVATHPGGVAASMAAAARLNENVNA</sequence>
<reference key="1">
    <citation type="journal article" date="1988" name="Plant Mol. Biol.">
        <title>Sequence and characterization of 6 Lea proteins and their genes from cotton.</title>
        <authorList>
            <person name="Baker J."/>
            <person name="Steele C."/>
            <person name="Dure L. III"/>
        </authorList>
        <dbReference type="AGRICOLA" id="IND92000052"/>
    </citation>
    <scope>NUCLEOTIDE SEQUENCE [GENOMIC DNA]</scope>
    <source>
        <strain>cv. Coker 201</strain>
        <tissue>Seed</tissue>
    </source>
</reference>
<accession>P09444</accession>
<dbReference type="EMBL" id="M19389">
    <property type="protein sequence ID" value="AAA33075.1"/>
    <property type="molecule type" value="Genomic_DNA"/>
</dbReference>
<dbReference type="EMBL" id="X13206">
    <property type="protein sequence ID" value="CAA31594.1"/>
    <property type="molecule type" value="Genomic_DNA"/>
</dbReference>
<dbReference type="PIR" id="S04046">
    <property type="entry name" value="S04046"/>
</dbReference>
<dbReference type="STRING" id="3635.P09444"/>
<dbReference type="PaxDb" id="3635-P09444"/>
<dbReference type="Proteomes" id="UP000189702">
    <property type="component" value="Unplaced"/>
</dbReference>
<dbReference type="InterPro" id="IPR042971">
    <property type="entry name" value="LEA_SMP"/>
</dbReference>
<dbReference type="InterPro" id="IPR007011">
    <property type="entry name" value="LEA_SMP_dom"/>
</dbReference>
<dbReference type="PANTHER" id="PTHR31174:SF7">
    <property type="entry name" value="LATE EMBRYOGENESIS ABUNDANT PROTEIN 31-RELATED"/>
    <property type="match status" value="1"/>
</dbReference>
<dbReference type="PANTHER" id="PTHR31174">
    <property type="entry name" value="SEED MATURATION FAMILY PROTEIN"/>
    <property type="match status" value="1"/>
</dbReference>
<dbReference type="Pfam" id="PF04927">
    <property type="entry name" value="SMP"/>
    <property type="match status" value="3"/>
</dbReference>
<comment type="function">
    <text>LEA proteins are late embryonic proteins abundant in higher plant seed embryos. There are two subsets of LEA proteins (5a and 5b), the first ones are expressed when the cotyledon weight reach 80 mg and the second set are expressed above 100 mg. The function of those proteins is not known.</text>
</comment>
<comment type="miscellaneous">
    <text>This is a SET 5b protein.</text>
</comment>
<comment type="similarity">
    <text evidence="3">Belongs to the LEA type SMP family.</text>
</comment>
<organism>
    <name type="scientific">Gossypium hirsutum</name>
    <name type="common">Upland cotton</name>
    <name type="synonym">Gossypium mexicanum</name>
    <dbReference type="NCBI Taxonomy" id="3635"/>
    <lineage>
        <taxon>Eukaryota</taxon>
        <taxon>Viridiplantae</taxon>
        <taxon>Streptophyta</taxon>
        <taxon>Embryophyta</taxon>
        <taxon>Tracheophyta</taxon>
        <taxon>Spermatophyta</taxon>
        <taxon>Magnoliopsida</taxon>
        <taxon>eudicotyledons</taxon>
        <taxon>Gunneridae</taxon>
        <taxon>Pentapetalae</taxon>
        <taxon>rosids</taxon>
        <taxon>malvids</taxon>
        <taxon>Malvales</taxon>
        <taxon>Malvaceae</taxon>
        <taxon>Malvoideae</taxon>
        <taxon>Gossypium</taxon>
    </lineage>
</organism>